<comment type="function">
    <text evidence="4 9 12 13 14 15 16 19 20">Ubiquitin-conjugating enzyme E2 that specifically acts with HECT-type and RBR family E3 ubiquitin-protein ligases. Does not function with most RING-containing E3 ubiquitin-protein ligases because it lacks intrinsic E3-independent reactivity with lysine; in contrast, it has activity with the RBR family E3 enzymes, such as PRKN, RNF31 and ARIH1, that function like RING-HECT hybrids. Accepts ubiquitin from the E1 complex and catalyzes its covalent attachment to other proteins. Mediates ubiquitination by the CUL9-RBX1 complex (PubMed:38605244). In vitro catalyzes 'Lys-11'-linked polyubiquitination. Involved in the selective degradation of short-lived and abnormal proteins. Down-regulated during the S-phase it is involved in progression through the cell cycle. Regulates nuclear hormone receptors transcriptional activity. May play a role in myelopoiesis.</text>
</comment>
<comment type="catalytic activity">
    <reaction evidence="1 2 15 20">
        <text>S-ubiquitinyl-[E1 ubiquitin-activating enzyme]-L-cysteine + [E2 ubiquitin-conjugating enzyme]-L-cysteine = [E1 ubiquitin-activating enzyme]-L-cysteine + S-ubiquitinyl-[E2 ubiquitin-conjugating enzyme]-L-cysteine.</text>
        <dbReference type="EC" id="2.3.2.23"/>
    </reaction>
</comment>
<comment type="pathway">
    <text evidence="1">Protein modification; protein ubiquitination.</text>
</comment>
<comment type="subunit">
    <text evidence="3 4 5 6 7 8 9 10 11 12 14 16 18">Interacts with PRKN; involved in ubiquitination and degradation of misfolded proteins. Interacts with UBE3A; used by the papilloma virus HPV-16 E6 protein to ubiquitinate p53/TP53. Interacts with CCNB1IP1, CBL, ZAP70, RNF19A, RNF19B and RNF144B. Interacts with ARIH1. Interacts with ARIH2 (via RING-type 1). Interacts with NCOA1; they functionally interact to regulate progesterone receptor transcriptional activity. May interact with NR3C1. Interacts with NDFIP1 (via N-terminus); the interaction mediates recruitment of UBE2L3 to ITCH and causes MAP3K7 ubiquitination (PubMed:25632008).</text>
</comment>
<comment type="interaction">
    <interactant intactId="EBI-711173">
        <id>P68036</id>
    </interactant>
    <interactant intactId="EBI-2514233">
        <id>Q9Y4X5</id>
        <label>ARIH1</label>
    </interactant>
    <organismsDiffer>false</organismsDiffer>
    <experiments>7</experiments>
</comment>
<comment type="interaction">
    <interactant intactId="EBI-711173">
        <id>P68036</id>
    </interactant>
    <interactant intactId="EBI-711158">
        <id>O95376</id>
        <label>ARIH2</label>
    </interactant>
    <organismsDiffer>false</organismsDiffer>
    <experiments>12</experiments>
</comment>
<comment type="interaction">
    <interactant intactId="EBI-711173">
        <id>P68036</id>
    </interactant>
    <interactant intactId="EBI-2340316">
        <id>O15344</id>
        <label>MID1</label>
    </interactant>
    <organismsDiffer>false</organismsDiffer>
    <experiments>4</experiments>
</comment>
<comment type="interaction">
    <interactant intactId="EBI-711173">
        <id>P68036</id>
    </interactant>
    <interactant intactId="EBI-21251460">
        <id>O60260-5</id>
        <label>PRKN</label>
    </interactant>
    <organismsDiffer>false</organismsDiffer>
    <experiments>3</experiments>
</comment>
<comment type="interaction">
    <interactant intactId="EBI-711173">
        <id>P68036</id>
    </interactant>
    <interactant intactId="EBI-2340624">
        <id>Q9BYM8</id>
        <label>RBCK1</label>
    </interactant>
    <organismsDiffer>false</organismsDiffer>
    <experiments>4</experiments>
</comment>
<comment type="interaction">
    <interactant intactId="EBI-711173">
        <id>P68036</id>
    </interactant>
    <interactant intactId="EBI-2340657">
        <id>P50876</id>
        <label>RNF144A</label>
    </interactant>
    <organismsDiffer>false</organismsDiffer>
    <experiments>4</experiments>
</comment>
<comment type="interaction">
    <interactant intactId="EBI-711173">
        <id>P68036</id>
    </interactant>
    <interactant intactId="EBI-2130099">
        <id>Q8N6D2</id>
        <label>RNF182</label>
    </interactant>
    <organismsDiffer>false</organismsDiffer>
    <experiments>3</experiments>
</comment>
<comment type="interaction">
    <interactant intactId="EBI-711173">
        <id>P68036</id>
    </interactant>
    <interactant intactId="EBI-2466594">
        <id>Q6ZMZ0</id>
        <label>RNF19B</label>
    </interactant>
    <organismsDiffer>false</organismsDiffer>
    <experiments>2</experiments>
</comment>
<comment type="interaction">
    <interactant intactId="EBI-711173">
        <id>P68036</id>
    </interactant>
    <interactant intactId="EBI-723313">
        <id>Q9NWF9</id>
        <label>RNF216</label>
    </interactant>
    <organismsDiffer>false</organismsDiffer>
    <experiments>3</experiments>
</comment>
<comment type="interaction">
    <interactant intactId="EBI-711173">
        <id>P68036</id>
    </interactant>
    <interactant intactId="EBI-357085">
        <id>Q9UNE7</id>
        <label>STUB1</label>
    </interactant>
    <organismsDiffer>false</organismsDiffer>
    <experiments>3</experiments>
</comment>
<comment type="interaction">
    <interactant intactId="EBI-711173">
        <id>P68036</id>
    </interactant>
    <interactant intactId="EBI-9316527">
        <id>Q99PZ6</id>
        <label>ospG</label>
    </interactant>
    <organismsDiffer>true</organismsDiffer>
    <experiments>3</experiments>
</comment>
<comment type="interaction">
    <interactant intactId="EBI-15556257">
        <id>P68036-1</id>
    </interactant>
    <interactant intactId="EBI-2514233">
        <id>Q9Y4X5</id>
        <label>ARIH1</label>
    </interactant>
    <organismsDiffer>false</organismsDiffer>
    <experiments>3</experiments>
</comment>
<comment type="interaction">
    <interactant intactId="EBI-15556257">
        <id>P68036-1</id>
    </interactant>
    <interactant intactId="EBI-9316527">
        <id>Q99PZ6</id>
        <label>ospG</label>
    </interactant>
    <organismsDiffer>true</organismsDiffer>
    <experiments>4</experiments>
</comment>
<comment type="interaction">
    <interactant intactId="EBI-15556257">
        <id>P68036-1</id>
    </interactant>
    <interactant intactId="EBI-15674008">
        <id>Q8ZNR3</id>
        <label>sopA</label>
    </interactant>
    <organismsDiffer>true</organismsDiffer>
    <experiments>2</experiments>
</comment>
<comment type="subcellular location">
    <subcellularLocation>
        <location evidence="7 12">Nucleus</location>
    </subcellularLocation>
    <subcellularLocation>
        <location evidence="7 12">Cytoplasm</location>
    </subcellularLocation>
</comment>
<comment type="alternative products">
    <event type="alternative splicing"/>
    <isoform>
        <id>P68036-1</id>
        <name>1</name>
        <sequence type="displayed"/>
    </isoform>
    <isoform>
        <id>P68036-2</id>
        <name>2</name>
        <sequence type="described" ref="VSP_045152"/>
    </isoform>
    <isoform>
        <id>P68036-3</id>
        <name>3</name>
        <sequence type="described" ref="VSP_047342"/>
    </isoform>
</comment>
<comment type="tissue specificity">
    <text>Ubiquitous, with highest expression in testis.</text>
</comment>
<comment type="domain">
    <text evidence="16">In contrast to other ubiquitin-conjugating enzymes E2, residues essential for lysine reactivity are absent: Pro and a His residues are present instead of an Asp and an Asp residues in positions 88 and 119, respectively.</text>
</comment>
<comment type="PTM">
    <text evidence="13 17">Ubiquitinated. The alteration of UBE2L3 protein levels during the S-phase of the cell cycle is due to ubiquitin-dependent proteasomal degradation. Autoubiquitinated in vitro (PubMed:22496338).</text>
</comment>
<comment type="similarity">
    <text evidence="1">Belongs to the ubiquitin-conjugating enzyme family.</text>
</comment>
<comment type="caution">
    <text evidence="22">PubMed:10760570 reported that UBE2L1, UBE2L2 and UBE2L4 are most likely pseudogenes and the only expressed member of this subfamily seems to be UBE2L3.</text>
</comment>
<accession>P68036</accession>
<accession>B2R4A7</accession>
<accession>B4DDG1</accession>
<accession>B4DSZ4</accession>
<accession>E7EWS7</accession>
<accession>P51966</accession>
<accession>P70653</accession>
<accession>Q9HAV1</accession>
<dbReference type="EC" id="2.3.2.23" evidence="15"/>
<dbReference type="EMBL" id="S81003">
    <property type="protein sequence ID" value="AAB36017.1"/>
    <property type="molecule type" value="mRNA"/>
</dbReference>
<dbReference type="EMBL" id="X92962">
    <property type="protein sequence ID" value="CAA63538.1"/>
    <property type="molecule type" value="mRNA"/>
</dbReference>
<dbReference type="EMBL" id="AJ000519">
    <property type="protein sequence ID" value="CAA04156.1"/>
    <property type="molecule type" value="mRNA"/>
</dbReference>
<dbReference type="EMBL" id="AF300336">
    <property type="protein sequence ID" value="AAG17922.1"/>
    <property type="molecule type" value="Genomic_DNA"/>
</dbReference>
<dbReference type="EMBL" id="CR456606">
    <property type="protein sequence ID" value="CAG30492.1"/>
    <property type="molecule type" value="mRNA"/>
</dbReference>
<dbReference type="EMBL" id="AK293179">
    <property type="protein sequence ID" value="BAG56722.1"/>
    <property type="molecule type" value="mRNA"/>
</dbReference>
<dbReference type="EMBL" id="AK299985">
    <property type="protein sequence ID" value="BAG61806.1"/>
    <property type="molecule type" value="mRNA"/>
</dbReference>
<dbReference type="EMBL" id="AK311761">
    <property type="protein sequence ID" value="BAG34704.1"/>
    <property type="molecule type" value="mRNA"/>
</dbReference>
<dbReference type="EMBL" id="AP000553">
    <property type="status" value="NOT_ANNOTATED_CDS"/>
    <property type="molecule type" value="Genomic_DNA"/>
</dbReference>
<dbReference type="EMBL" id="AP000557">
    <property type="status" value="NOT_ANNOTATED_CDS"/>
    <property type="molecule type" value="Genomic_DNA"/>
</dbReference>
<dbReference type="EMBL" id="AP000558">
    <property type="status" value="NOT_ANNOTATED_CDS"/>
    <property type="molecule type" value="Genomic_DNA"/>
</dbReference>
<dbReference type="EMBL" id="CH471095">
    <property type="protein sequence ID" value="EAW59459.1"/>
    <property type="molecule type" value="Genomic_DNA"/>
</dbReference>
<dbReference type="EMBL" id="BC053368">
    <property type="protein sequence ID" value="AAH53368.1"/>
    <property type="molecule type" value="mRNA"/>
</dbReference>
<dbReference type="CCDS" id="CCDS13790.1">
    <molecule id="P68036-1"/>
</dbReference>
<dbReference type="CCDS" id="CCDS58795.1">
    <molecule id="P68036-3"/>
</dbReference>
<dbReference type="CCDS" id="CCDS58796.1">
    <molecule id="P68036-2"/>
</dbReference>
<dbReference type="RefSeq" id="NP_001243284.1">
    <molecule id="P68036-3"/>
    <property type="nucleotide sequence ID" value="NM_001256355.1"/>
</dbReference>
<dbReference type="RefSeq" id="NP_001243285.1">
    <molecule id="P68036-2"/>
    <property type="nucleotide sequence ID" value="NM_001256356.2"/>
</dbReference>
<dbReference type="RefSeq" id="NP_003338.1">
    <molecule id="P68036-1"/>
    <property type="nucleotide sequence ID" value="NM_003347.4"/>
</dbReference>
<dbReference type="PDB" id="1C4Z">
    <property type="method" value="X-ray"/>
    <property type="resolution" value="2.60 A"/>
    <property type="chains" value="D=1-154"/>
</dbReference>
<dbReference type="PDB" id="1FBV">
    <property type="method" value="X-ray"/>
    <property type="resolution" value="2.90 A"/>
    <property type="chains" value="C=1-154"/>
</dbReference>
<dbReference type="PDB" id="3SQV">
    <property type="method" value="X-ray"/>
    <property type="resolution" value="3.30 A"/>
    <property type="chains" value="C/D=1-154"/>
</dbReference>
<dbReference type="PDB" id="3SY2">
    <property type="method" value="X-ray"/>
    <property type="resolution" value="3.27 A"/>
    <property type="chains" value="C/D=1-154"/>
</dbReference>
<dbReference type="PDB" id="4Q5E">
    <property type="method" value="X-ray"/>
    <property type="resolution" value="1.87 A"/>
    <property type="chains" value="C=1-154"/>
</dbReference>
<dbReference type="PDB" id="4Q5H">
    <property type="method" value="X-ray"/>
    <property type="resolution" value="2.00 A"/>
    <property type="chains" value="C=1-154"/>
</dbReference>
<dbReference type="PDB" id="5HPT">
    <property type="method" value="X-ray"/>
    <property type="resolution" value="2.84 A"/>
    <property type="chains" value="C/F=2-154"/>
</dbReference>
<dbReference type="PDB" id="5TTE">
    <property type="method" value="X-ray"/>
    <property type="resolution" value="3.50 A"/>
    <property type="chains" value="E=1-154"/>
</dbReference>
<dbReference type="PDB" id="5UDH">
    <property type="method" value="X-ray"/>
    <property type="resolution" value="3.24 A"/>
    <property type="chains" value="C/D=1-154"/>
</dbReference>
<dbReference type="PDB" id="6CP2">
    <property type="method" value="X-ray"/>
    <property type="resolution" value="2.90 A"/>
    <property type="chains" value="B=1-154"/>
</dbReference>
<dbReference type="PDB" id="6DJW">
    <property type="method" value="X-ray"/>
    <property type="resolution" value="3.80 A"/>
    <property type="chains" value="C=1-154"/>
</dbReference>
<dbReference type="PDB" id="6DJX">
    <property type="method" value="X-ray"/>
    <property type="resolution" value="4.80 A"/>
    <property type="chains" value="C=1-154"/>
</dbReference>
<dbReference type="PDB" id="6N13">
    <property type="method" value="NMR"/>
    <property type="chains" value="C=1-154"/>
</dbReference>
<dbReference type="PDB" id="6XXU">
    <property type="method" value="NMR"/>
    <property type="chains" value="A=1-154"/>
</dbReference>
<dbReference type="PDB" id="7B5L">
    <property type="method" value="EM"/>
    <property type="resolution" value="3.80 A"/>
    <property type="chains" value="D=1-154"/>
</dbReference>
<dbReference type="PDB" id="7B5N">
    <property type="method" value="EM"/>
    <property type="resolution" value="3.60 A"/>
    <property type="chains" value="D=1-154"/>
</dbReference>
<dbReference type="PDB" id="7OIK">
    <property type="method" value="EM"/>
    <property type="resolution" value="3.50 A"/>
    <property type="chains" value="B=1-154"/>
</dbReference>
<dbReference type="PDB" id="7V8F">
    <property type="method" value="X-ray"/>
    <property type="resolution" value="1.66 A"/>
    <property type="chains" value="A=1-154"/>
</dbReference>
<dbReference type="PDB" id="8EAZ">
    <property type="method" value="X-ray"/>
    <property type="resolution" value="3.08 A"/>
    <property type="chains" value="C/D=1-154"/>
</dbReference>
<dbReference type="PDB" id="8EB0">
    <property type="method" value="X-ray"/>
    <property type="resolution" value="3.03 A"/>
    <property type="chains" value="B=1-154"/>
</dbReference>
<dbReference type="PDBsum" id="1C4Z"/>
<dbReference type="PDBsum" id="1FBV"/>
<dbReference type="PDBsum" id="3SQV"/>
<dbReference type="PDBsum" id="3SY2"/>
<dbReference type="PDBsum" id="4Q5E"/>
<dbReference type="PDBsum" id="4Q5H"/>
<dbReference type="PDBsum" id="5HPT"/>
<dbReference type="PDBsum" id="5TTE"/>
<dbReference type="PDBsum" id="5UDH"/>
<dbReference type="PDBsum" id="6CP2"/>
<dbReference type="PDBsum" id="6DJW"/>
<dbReference type="PDBsum" id="6DJX"/>
<dbReference type="PDBsum" id="6N13"/>
<dbReference type="PDBsum" id="6XXU"/>
<dbReference type="PDBsum" id="7B5L"/>
<dbReference type="PDBsum" id="7B5N"/>
<dbReference type="PDBsum" id="7OIK"/>
<dbReference type="PDBsum" id="7V8F"/>
<dbReference type="PDBsum" id="8EAZ"/>
<dbReference type="PDBsum" id="8EB0"/>
<dbReference type="BMRB" id="P68036"/>
<dbReference type="EMDB" id="EMD-12037"/>
<dbReference type="EMDB" id="EMD-12041"/>
<dbReference type="EMDB" id="EMD-12931"/>
<dbReference type="SMR" id="P68036"/>
<dbReference type="BioGRID" id="113180">
    <property type="interactions" value="225"/>
</dbReference>
<dbReference type="CORUM" id="P68036"/>
<dbReference type="DIP" id="DIP-6124N"/>
<dbReference type="FunCoup" id="P68036">
    <property type="interactions" value="3461"/>
</dbReference>
<dbReference type="IntAct" id="P68036">
    <property type="interactions" value="53"/>
</dbReference>
<dbReference type="MINT" id="P68036"/>
<dbReference type="ChEMBL" id="CHEMBL4105871"/>
<dbReference type="MoonDB" id="P68036">
    <property type="type" value="Predicted"/>
</dbReference>
<dbReference type="GlyGen" id="P68036">
    <property type="glycosylation" value="2 sites, 1 O-linked glycan (1 site)"/>
</dbReference>
<dbReference type="iPTMnet" id="P68036"/>
<dbReference type="PhosphoSitePlus" id="P68036"/>
<dbReference type="SwissPalm" id="P68036"/>
<dbReference type="BioMuta" id="UBE2L3"/>
<dbReference type="DMDM" id="54039805"/>
<dbReference type="OGP" id="P51966"/>
<dbReference type="jPOST" id="P68036"/>
<dbReference type="MassIVE" id="P68036"/>
<dbReference type="PaxDb" id="9606-ENSP00000485133"/>
<dbReference type="PeptideAtlas" id="P68036"/>
<dbReference type="ProteomicsDB" id="18904"/>
<dbReference type="ProteomicsDB" id="3856"/>
<dbReference type="ProteomicsDB" id="57528">
    <molecule id="P68036-1"/>
</dbReference>
<dbReference type="Pumba" id="P68036"/>
<dbReference type="TopDownProteomics" id="P68036-1">
    <molecule id="P68036-1"/>
</dbReference>
<dbReference type="TopDownProteomics" id="P68036-2">
    <molecule id="P68036-2"/>
</dbReference>
<dbReference type="Antibodypedia" id="8540">
    <property type="antibodies" value="461 antibodies from 37 providers"/>
</dbReference>
<dbReference type="DNASU" id="7332"/>
<dbReference type="Ensembl" id="ENST00000342192.9">
    <molecule id="P68036-1"/>
    <property type="protein sequence ID" value="ENSP00000344259.5"/>
    <property type="gene ID" value="ENSG00000185651.16"/>
</dbReference>
<dbReference type="Ensembl" id="ENST00000458578.6">
    <molecule id="P68036-3"/>
    <property type="protein sequence ID" value="ENSP00000400906.2"/>
    <property type="gene ID" value="ENSG00000185651.16"/>
</dbReference>
<dbReference type="Ensembl" id="ENST00000545681.2">
    <molecule id="P68036-2"/>
    <property type="protein sequence ID" value="ENSP00000445931.1"/>
    <property type="gene ID" value="ENSG00000185651.16"/>
</dbReference>
<dbReference type="GeneID" id="7332"/>
<dbReference type="KEGG" id="hsa:7332"/>
<dbReference type="MANE-Select" id="ENST00000342192.9">
    <property type="protein sequence ID" value="ENSP00000344259.5"/>
    <property type="RefSeq nucleotide sequence ID" value="NM_003347.4"/>
    <property type="RefSeq protein sequence ID" value="NP_003338.1"/>
</dbReference>
<dbReference type="UCSC" id="uc002zva.2">
    <molecule id="P68036-1"/>
    <property type="organism name" value="human"/>
</dbReference>
<dbReference type="AGR" id="HGNC:12488"/>
<dbReference type="CTD" id="7332"/>
<dbReference type="DisGeNET" id="7332"/>
<dbReference type="GeneCards" id="UBE2L3"/>
<dbReference type="HGNC" id="HGNC:12488">
    <property type="gene designation" value="UBE2L3"/>
</dbReference>
<dbReference type="HPA" id="ENSG00000185651">
    <property type="expression patterns" value="Low tissue specificity"/>
</dbReference>
<dbReference type="MalaCards" id="UBE2L3"/>
<dbReference type="MIM" id="603721">
    <property type="type" value="gene"/>
</dbReference>
<dbReference type="neXtProt" id="NX_P68036"/>
<dbReference type="OpenTargets" id="ENSG00000185651"/>
<dbReference type="Orphanet" id="536">
    <property type="disease" value="Systemic lupus erythematosus"/>
</dbReference>
<dbReference type="PharmGKB" id="PA37137"/>
<dbReference type="VEuPathDB" id="HostDB:ENSG00000185651"/>
<dbReference type="eggNOG" id="KOG0422">
    <property type="taxonomic scope" value="Eukaryota"/>
</dbReference>
<dbReference type="GeneTree" id="ENSGT00940000153654"/>
<dbReference type="HOGENOM" id="CLU_030988_13_3_1"/>
<dbReference type="InParanoid" id="P68036"/>
<dbReference type="OMA" id="ADLHTWH"/>
<dbReference type="OrthoDB" id="9973183at2759"/>
<dbReference type="PAN-GO" id="P68036">
    <property type="GO annotations" value="6 GO annotations based on evolutionary models"/>
</dbReference>
<dbReference type="PhylomeDB" id="P68036"/>
<dbReference type="TreeFam" id="TF313043"/>
<dbReference type="BRENDA" id="2.3.2.23">
    <property type="organism ID" value="2681"/>
</dbReference>
<dbReference type="BRENDA" id="2.3.2.24">
    <property type="organism ID" value="2681"/>
</dbReference>
<dbReference type="PathwayCommons" id="P68036"/>
<dbReference type="Reactome" id="R-HSA-5205685">
    <property type="pathway name" value="PINK1-PRKN Mediated Mitophagy"/>
</dbReference>
<dbReference type="Reactome" id="R-HSA-5357905">
    <property type="pathway name" value="Regulation of TNFR1 signaling"/>
</dbReference>
<dbReference type="Reactome" id="R-HSA-5675482">
    <property type="pathway name" value="Regulation of necroptotic cell death"/>
</dbReference>
<dbReference type="Reactome" id="R-HSA-8866652">
    <property type="pathway name" value="Synthesis of active ubiquitin: roles of E1 and E2 enzymes"/>
</dbReference>
<dbReference type="Reactome" id="R-HSA-8866654">
    <property type="pathway name" value="E3 ubiquitin ligases ubiquitinate target proteins"/>
</dbReference>
<dbReference type="Reactome" id="R-HSA-983168">
    <property type="pathway name" value="Antigen processing: Ubiquitination &amp; Proteasome degradation"/>
</dbReference>
<dbReference type="SignaLink" id="P68036"/>
<dbReference type="SIGNOR" id="P68036"/>
<dbReference type="UniPathway" id="UPA00143"/>
<dbReference type="BioGRID-ORCS" id="7332">
    <property type="hits" value="680 hits in 1137 CRISPR screens"/>
</dbReference>
<dbReference type="ChiTaRS" id="UBE2L3">
    <property type="organism name" value="human"/>
</dbReference>
<dbReference type="EvolutionaryTrace" id="P68036"/>
<dbReference type="GeneWiki" id="UBE2L3"/>
<dbReference type="GenomeRNAi" id="7332"/>
<dbReference type="Pharos" id="P68036">
    <property type="development level" value="Tbio"/>
</dbReference>
<dbReference type="PRO" id="PR:P68036"/>
<dbReference type="Proteomes" id="UP000005640">
    <property type="component" value="Chromosome 22"/>
</dbReference>
<dbReference type="RNAct" id="P68036">
    <property type="molecule type" value="protein"/>
</dbReference>
<dbReference type="Bgee" id="ENSG00000185651">
    <property type="expression patterns" value="Expressed in oocyte and 205 other cell types or tissues"/>
</dbReference>
<dbReference type="ExpressionAtlas" id="P68036">
    <property type="expression patterns" value="baseline and differential"/>
</dbReference>
<dbReference type="GO" id="GO:0005737">
    <property type="term" value="C:cytoplasm"/>
    <property type="evidence" value="ECO:0000314"/>
    <property type="project" value="UniProtKB"/>
</dbReference>
<dbReference type="GO" id="GO:0005829">
    <property type="term" value="C:cytosol"/>
    <property type="evidence" value="ECO:0000304"/>
    <property type="project" value="Reactome"/>
</dbReference>
<dbReference type="GO" id="GO:0005654">
    <property type="term" value="C:nucleoplasm"/>
    <property type="evidence" value="ECO:0000304"/>
    <property type="project" value="Reactome"/>
</dbReference>
<dbReference type="GO" id="GO:0005634">
    <property type="term" value="C:nucleus"/>
    <property type="evidence" value="ECO:0000314"/>
    <property type="project" value="UniProtKB"/>
</dbReference>
<dbReference type="GO" id="GO:0000151">
    <property type="term" value="C:ubiquitin ligase complex"/>
    <property type="evidence" value="ECO:0000304"/>
    <property type="project" value="UniProtKB"/>
</dbReference>
<dbReference type="GO" id="GO:0005524">
    <property type="term" value="F:ATP binding"/>
    <property type="evidence" value="ECO:0007669"/>
    <property type="project" value="UniProtKB-KW"/>
</dbReference>
<dbReference type="GO" id="GO:0019899">
    <property type="term" value="F:enzyme binding"/>
    <property type="evidence" value="ECO:0000304"/>
    <property type="project" value="UniProtKB"/>
</dbReference>
<dbReference type="GO" id="GO:0003723">
    <property type="term" value="F:RNA binding"/>
    <property type="evidence" value="ECO:0007005"/>
    <property type="project" value="UniProtKB"/>
</dbReference>
<dbReference type="GO" id="GO:0003713">
    <property type="term" value="F:transcription coactivator activity"/>
    <property type="evidence" value="ECO:0000314"/>
    <property type="project" value="UniProtKB"/>
</dbReference>
<dbReference type="GO" id="GO:0061631">
    <property type="term" value="F:ubiquitin conjugating enzyme activity"/>
    <property type="evidence" value="ECO:0000314"/>
    <property type="project" value="MGI"/>
</dbReference>
<dbReference type="GO" id="GO:0031625">
    <property type="term" value="F:ubiquitin protein ligase binding"/>
    <property type="evidence" value="ECO:0000353"/>
    <property type="project" value="UniProtKB"/>
</dbReference>
<dbReference type="GO" id="GO:0097027">
    <property type="term" value="F:ubiquitin-protein transferase activator activity"/>
    <property type="evidence" value="ECO:0000316"/>
    <property type="project" value="ParkinsonsUK-UCL"/>
</dbReference>
<dbReference type="GO" id="GO:0004842">
    <property type="term" value="F:ubiquitin-protein transferase activity"/>
    <property type="evidence" value="ECO:0000314"/>
    <property type="project" value="UniProtKB"/>
</dbReference>
<dbReference type="GO" id="GO:0044770">
    <property type="term" value="P:cell cycle phase transition"/>
    <property type="evidence" value="ECO:0000315"/>
    <property type="project" value="UniProtKB"/>
</dbReference>
<dbReference type="GO" id="GO:0008283">
    <property type="term" value="P:cell population proliferation"/>
    <property type="evidence" value="ECO:0000315"/>
    <property type="project" value="UniProtKB"/>
</dbReference>
<dbReference type="GO" id="GO:0071385">
    <property type="term" value="P:cellular response to glucocorticoid stimulus"/>
    <property type="evidence" value="ECO:0000314"/>
    <property type="project" value="UniProtKB"/>
</dbReference>
<dbReference type="GO" id="GO:0071383">
    <property type="term" value="P:cellular response to steroid hormone stimulus"/>
    <property type="evidence" value="ECO:0000315"/>
    <property type="project" value="UniProtKB"/>
</dbReference>
<dbReference type="GO" id="GO:1903955">
    <property type="term" value="P:positive regulation of protein targeting to mitochondrion"/>
    <property type="evidence" value="ECO:0007001"/>
    <property type="project" value="ParkinsonsUK-UCL"/>
</dbReference>
<dbReference type="GO" id="GO:0031398">
    <property type="term" value="P:positive regulation of protein ubiquitination"/>
    <property type="evidence" value="ECO:0000316"/>
    <property type="project" value="ParkinsonsUK-UCL"/>
</dbReference>
<dbReference type="GO" id="GO:0070979">
    <property type="term" value="P:protein K11-linked ubiquitination"/>
    <property type="evidence" value="ECO:0000314"/>
    <property type="project" value="UniProtKB"/>
</dbReference>
<dbReference type="GO" id="GO:0036211">
    <property type="term" value="P:protein modification process"/>
    <property type="evidence" value="ECO:0000304"/>
    <property type="project" value="UniProtKB"/>
</dbReference>
<dbReference type="GO" id="GO:0000209">
    <property type="term" value="P:protein polyubiquitination"/>
    <property type="evidence" value="ECO:0000314"/>
    <property type="project" value="UniProtKB"/>
</dbReference>
<dbReference type="GO" id="GO:0016567">
    <property type="term" value="P:protein ubiquitination"/>
    <property type="evidence" value="ECO:0000314"/>
    <property type="project" value="UniProtKB"/>
</dbReference>
<dbReference type="GO" id="GO:0006355">
    <property type="term" value="P:regulation of DNA-templated transcription"/>
    <property type="evidence" value="ECO:0000314"/>
    <property type="project" value="UniProtKB"/>
</dbReference>
<dbReference type="GO" id="GO:0006511">
    <property type="term" value="P:ubiquitin-dependent protein catabolic process"/>
    <property type="evidence" value="ECO:0000318"/>
    <property type="project" value="GO_Central"/>
</dbReference>
<dbReference type="CDD" id="cd23801">
    <property type="entry name" value="UBCc_UBE2L3"/>
    <property type="match status" value="1"/>
</dbReference>
<dbReference type="FunFam" id="3.10.110.10:FF:000011">
    <property type="entry name" value="Ubiquitin-conjugating enzyme E2 L3"/>
    <property type="match status" value="1"/>
</dbReference>
<dbReference type="Gene3D" id="3.10.110.10">
    <property type="entry name" value="Ubiquitin Conjugating Enzyme"/>
    <property type="match status" value="1"/>
</dbReference>
<dbReference type="IDEAL" id="IID00592"/>
<dbReference type="InterPro" id="IPR050113">
    <property type="entry name" value="Ub_conjugating_enzyme"/>
</dbReference>
<dbReference type="InterPro" id="IPR000608">
    <property type="entry name" value="UBQ-conjugat_E2_core"/>
</dbReference>
<dbReference type="InterPro" id="IPR023313">
    <property type="entry name" value="UBQ-conjugating_AS"/>
</dbReference>
<dbReference type="InterPro" id="IPR016135">
    <property type="entry name" value="UBQ-conjugating_enzyme/RWD"/>
</dbReference>
<dbReference type="PANTHER" id="PTHR24067">
    <property type="entry name" value="UBIQUITIN-CONJUGATING ENZYME E2"/>
    <property type="match status" value="1"/>
</dbReference>
<dbReference type="Pfam" id="PF00179">
    <property type="entry name" value="UQ_con"/>
    <property type="match status" value="1"/>
</dbReference>
<dbReference type="SMART" id="SM00212">
    <property type="entry name" value="UBCc"/>
    <property type="match status" value="1"/>
</dbReference>
<dbReference type="SUPFAM" id="SSF54495">
    <property type="entry name" value="UBC-like"/>
    <property type="match status" value="1"/>
</dbReference>
<dbReference type="PROSITE" id="PS00183">
    <property type="entry name" value="UBC_1"/>
    <property type="match status" value="1"/>
</dbReference>
<dbReference type="PROSITE" id="PS50127">
    <property type="entry name" value="UBC_2"/>
    <property type="match status" value="1"/>
</dbReference>
<evidence type="ECO:0000255" key="1">
    <source>
        <dbReference type="PROSITE-ProRule" id="PRU00388"/>
    </source>
</evidence>
<evidence type="ECO:0000255" key="2">
    <source>
        <dbReference type="PROSITE-ProRule" id="PRU10133"/>
    </source>
</evidence>
<evidence type="ECO:0000269" key="3">
    <source>
    </source>
</evidence>
<evidence type="ECO:0000269" key="4">
    <source>
    </source>
</evidence>
<evidence type="ECO:0000269" key="5">
    <source>
    </source>
</evidence>
<evidence type="ECO:0000269" key="6">
    <source>
    </source>
</evidence>
<evidence type="ECO:0000269" key="7">
    <source>
    </source>
</evidence>
<evidence type="ECO:0000269" key="8">
    <source>
    </source>
</evidence>
<evidence type="ECO:0000269" key="9">
    <source>
    </source>
</evidence>
<evidence type="ECO:0000269" key="10">
    <source>
    </source>
</evidence>
<evidence type="ECO:0000269" key="11">
    <source>
    </source>
</evidence>
<evidence type="ECO:0000269" key="12">
    <source>
    </source>
</evidence>
<evidence type="ECO:0000269" key="13">
    <source>
    </source>
</evidence>
<evidence type="ECO:0000269" key="14">
    <source>
    </source>
</evidence>
<evidence type="ECO:0000269" key="15">
    <source>
    </source>
</evidence>
<evidence type="ECO:0000269" key="16">
    <source>
    </source>
</evidence>
<evidence type="ECO:0000269" key="17">
    <source>
    </source>
</evidence>
<evidence type="ECO:0000269" key="18">
    <source>
    </source>
</evidence>
<evidence type="ECO:0000269" key="19">
    <source>
    </source>
</evidence>
<evidence type="ECO:0000269" key="20">
    <source>
    </source>
</evidence>
<evidence type="ECO:0000303" key="21">
    <source>
    </source>
</evidence>
<evidence type="ECO:0000305" key="22"/>
<evidence type="ECO:0007744" key="23">
    <source>
    </source>
</evidence>
<evidence type="ECO:0007829" key="24">
    <source>
        <dbReference type="PDB" id="1FBV"/>
    </source>
</evidence>
<evidence type="ECO:0007829" key="25">
    <source>
        <dbReference type="PDB" id="3SQV"/>
    </source>
</evidence>
<evidence type="ECO:0007829" key="26">
    <source>
        <dbReference type="PDB" id="4Q5E"/>
    </source>
</evidence>
<evidence type="ECO:0007829" key="27">
    <source>
        <dbReference type="PDB" id="7V8F"/>
    </source>
</evidence>
<organism>
    <name type="scientific">Homo sapiens</name>
    <name type="common">Human</name>
    <dbReference type="NCBI Taxonomy" id="9606"/>
    <lineage>
        <taxon>Eukaryota</taxon>
        <taxon>Metazoa</taxon>
        <taxon>Chordata</taxon>
        <taxon>Craniata</taxon>
        <taxon>Vertebrata</taxon>
        <taxon>Euteleostomi</taxon>
        <taxon>Mammalia</taxon>
        <taxon>Eutheria</taxon>
        <taxon>Euarchontoglires</taxon>
        <taxon>Primates</taxon>
        <taxon>Haplorrhini</taxon>
        <taxon>Catarrhini</taxon>
        <taxon>Hominidae</taxon>
        <taxon>Homo</taxon>
    </lineage>
</organism>
<name>UB2L3_HUMAN</name>
<reference key="1">
    <citation type="journal article" date="1995" name="Mamm. Genome">
        <title>A human ubiquitin conjugating enzyme, L-UBC, maps in the Alzheimer's disease locus on chromosome 14q24.3.</title>
        <authorList>
            <person name="Robinson P.A."/>
            <person name="Leek J.P."/>
            <person name="Thompson J."/>
            <person name="Carr I.M."/>
            <person name="Bailey A."/>
            <person name="Moynihan T.P."/>
            <person name="Coletta P.L."/>
            <person name="Lench N.J."/>
            <person name="Markham A.F."/>
        </authorList>
    </citation>
    <scope>NUCLEOTIDE SEQUENCE [MRNA] (ISOFORM 1)</scope>
</reference>
<reference key="2">
    <citation type="journal article" date="1996" name="J. Biol. Chem.">
        <title>Cloning of human ubiquitin-conjugating enzymes UbcH6 and UbcH7 (E2-F1) and characterization of their interaction with E6-AP and RSP5.</title>
        <authorList>
            <person name="Nuber U."/>
            <person name="Schwarz S."/>
            <person name="Kaiser P."/>
            <person name="Schneider R."/>
            <person name="Scheffner M."/>
        </authorList>
    </citation>
    <scope>NUCLEOTIDE SEQUENCE [MRNA] (ISOFORM 1)</scope>
</reference>
<reference key="3">
    <citation type="journal article" date="1998" name="Genomics">
        <title>Fine-mapping, genomic organization, and transcript analysis of the human ubiquitin-conjugating enzyme gene UBE2L3.</title>
        <authorList>
            <person name="Moynihan T.P."/>
            <person name="Cole C.G."/>
            <person name="Dunham I."/>
            <person name="O'Neil L."/>
            <person name="Markham A.F."/>
            <person name="Robinson P.A."/>
        </authorList>
    </citation>
    <scope>NUCLEOTIDE SEQUENCE [MRNA] (ISOFORM 1)</scope>
    <source>
        <tissue>Testis</tissue>
    </source>
</reference>
<reference key="4">
    <citation type="submission" date="2000-08" db="EMBL/GenBank/DDBJ databases">
        <title>Is retroposition a common way of spreading ubiquitin-conjugating enzyme genes throughout mammalian genomes?</title>
        <authorList>
            <person name="Poloumienko A."/>
        </authorList>
    </citation>
    <scope>NUCLEOTIDE SEQUENCE [GENOMIC DNA]</scope>
    <source>
        <tissue>Blood</tissue>
    </source>
</reference>
<reference key="5">
    <citation type="journal article" date="2004" name="Genome Biol.">
        <title>A genome annotation-driven approach to cloning the human ORFeome.</title>
        <authorList>
            <person name="Collins J.E."/>
            <person name="Wright C.L."/>
            <person name="Edwards C.A."/>
            <person name="Davis M.P."/>
            <person name="Grinham J.A."/>
            <person name="Cole C.G."/>
            <person name="Goward M.E."/>
            <person name="Aguado B."/>
            <person name="Mallya M."/>
            <person name="Mokrab Y."/>
            <person name="Huckle E.J."/>
            <person name="Beare D.M."/>
            <person name="Dunham I."/>
        </authorList>
    </citation>
    <scope>NUCLEOTIDE SEQUENCE [LARGE SCALE MRNA] (ISOFORM 1)</scope>
</reference>
<reference key="6">
    <citation type="journal article" date="2004" name="Nat. Genet.">
        <title>Complete sequencing and characterization of 21,243 full-length human cDNAs.</title>
        <authorList>
            <person name="Ota T."/>
            <person name="Suzuki Y."/>
            <person name="Nishikawa T."/>
            <person name="Otsuki T."/>
            <person name="Sugiyama T."/>
            <person name="Irie R."/>
            <person name="Wakamatsu A."/>
            <person name="Hayashi K."/>
            <person name="Sato H."/>
            <person name="Nagai K."/>
            <person name="Kimura K."/>
            <person name="Makita H."/>
            <person name="Sekine M."/>
            <person name="Obayashi M."/>
            <person name="Nishi T."/>
            <person name="Shibahara T."/>
            <person name="Tanaka T."/>
            <person name="Ishii S."/>
            <person name="Yamamoto J."/>
            <person name="Saito K."/>
            <person name="Kawai Y."/>
            <person name="Isono Y."/>
            <person name="Nakamura Y."/>
            <person name="Nagahari K."/>
            <person name="Murakami K."/>
            <person name="Yasuda T."/>
            <person name="Iwayanagi T."/>
            <person name="Wagatsuma M."/>
            <person name="Shiratori A."/>
            <person name="Sudo H."/>
            <person name="Hosoiri T."/>
            <person name="Kaku Y."/>
            <person name="Kodaira H."/>
            <person name="Kondo H."/>
            <person name="Sugawara M."/>
            <person name="Takahashi M."/>
            <person name="Kanda K."/>
            <person name="Yokoi T."/>
            <person name="Furuya T."/>
            <person name="Kikkawa E."/>
            <person name="Omura Y."/>
            <person name="Abe K."/>
            <person name="Kamihara K."/>
            <person name="Katsuta N."/>
            <person name="Sato K."/>
            <person name="Tanikawa M."/>
            <person name="Yamazaki M."/>
            <person name="Ninomiya K."/>
            <person name="Ishibashi T."/>
            <person name="Yamashita H."/>
            <person name="Murakawa K."/>
            <person name="Fujimori K."/>
            <person name="Tanai H."/>
            <person name="Kimata M."/>
            <person name="Watanabe M."/>
            <person name="Hiraoka S."/>
            <person name="Chiba Y."/>
            <person name="Ishida S."/>
            <person name="Ono Y."/>
            <person name="Takiguchi S."/>
            <person name="Watanabe S."/>
            <person name="Yosida M."/>
            <person name="Hotuta T."/>
            <person name="Kusano J."/>
            <person name="Kanehori K."/>
            <person name="Takahashi-Fujii A."/>
            <person name="Hara H."/>
            <person name="Tanase T.-O."/>
            <person name="Nomura Y."/>
            <person name="Togiya S."/>
            <person name="Komai F."/>
            <person name="Hara R."/>
            <person name="Takeuchi K."/>
            <person name="Arita M."/>
            <person name="Imose N."/>
            <person name="Musashino K."/>
            <person name="Yuuki H."/>
            <person name="Oshima A."/>
            <person name="Sasaki N."/>
            <person name="Aotsuka S."/>
            <person name="Yoshikawa Y."/>
            <person name="Matsunawa H."/>
            <person name="Ichihara T."/>
            <person name="Shiohata N."/>
            <person name="Sano S."/>
            <person name="Moriya S."/>
            <person name="Momiyama H."/>
            <person name="Satoh N."/>
            <person name="Takami S."/>
            <person name="Terashima Y."/>
            <person name="Suzuki O."/>
            <person name="Nakagawa S."/>
            <person name="Senoh A."/>
            <person name="Mizoguchi H."/>
            <person name="Goto Y."/>
            <person name="Shimizu F."/>
            <person name="Wakebe H."/>
            <person name="Hishigaki H."/>
            <person name="Watanabe T."/>
            <person name="Sugiyama A."/>
            <person name="Takemoto M."/>
            <person name="Kawakami B."/>
            <person name="Yamazaki M."/>
            <person name="Watanabe K."/>
            <person name="Kumagai A."/>
            <person name="Itakura S."/>
            <person name="Fukuzumi Y."/>
            <person name="Fujimori Y."/>
            <person name="Komiyama M."/>
            <person name="Tashiro H."/>
            <person name="Tanigami A."/>
            <person name="Fujiwara T."/>
            <person name="Ono T."/>
            <person name="Yamada K."/>
            <person name="Fujii Y."/>
            <person name="Ozaki K."/>
            <person name="Hirao M."/>
            <person name="Ohmori Y."/>
            <person name="Kawabata A."/>
            <person name="Hikiji T."/>
            <person name="Kobatake N."/>
            <person name="Inagaki H."/>
            <person name="Ikema Y."/>
            <person name="Okamoto S."/>
            <person name="Okitani R."/>
            <person name="Kawakami T."/>
            <person name="Noguchi S."/>
            <person name="Itoh T."/>
            <person name="Shigeta K."/>
            <person name="Senba T."/>
            <person name="Matsumura K."/>
            <person name="Nakajima Y."/>
            <person name="Mizuno T."/>
            <person name="Morinaga M."/>
            <person name="Sasaki M."/>
            <person name="Togashi T."/>
            <person name="Oyama M."/>
            <person name="Hata H."/>
            <person name="Watanabe M."/>
            <person name="Komatsu T."/>
            <person name="Mizushima-Sugano J."/>
            <person name="Satoh T."/>
            <person name="Shirai Y."/>
            <person name="Takahashi Y."/>
            <person name="Nakagawa K."/>
            <person name="Okumura K."/>
            <person name="Nagase T."/>
            <person name="Nomura N."/>
            <person name="Kikuchi H."/>
            <person name="Masuho Y."/>
            <person name="Yamashita R."/>
            <person name="Nakai K."/>
            <person name="Yada T."/>
            <person name="Nakamura Y."/>
            <person name="Ohara O."/>
            <person name="Isogai T."/>
            <person name="Sugano S."/>
        </authorList>
    </citation>
    <scope>NUCLEOTIDE SEQUENCE [LARGE SCALE MRNA] (ISOFORMS 1; 2 AND 3)</scope>
    <source>
        <tissue>Adrenal gland</tissue>
        <tissue>Thalamus</tissue>
    </source>
</reference>
<reference key="7">
    <citation type="journal article" date="1999" name="Nature">
        <title>The DNA sequence of human chromosome 22.</title>
        <authorList>
            <person name="Dunham I."/>
            <person name="Hunt A.R."/>
            <person name="Collins J.E."/>
            <person name="Bruskiewich R."/>
            <person name="Beare D.M."/>
            <person name="Clamp M."/>
            <person name="Smink L.J."/>
            <person name="Ainscough R."/>
            <person name="Almeida J.P."/>
            <person name="Babbage A.K."/>
            <person name="Bagguley C."/>
            <person name="Bailey J."/>
            <person name="Barlow K.F."/>
            <person name="Bates K.N."/>
            <person name="Beasley O.P."/>
            <person name="Bird C.P."/>
            <person name="Blakey S.E."/>
            <person name="Bridgeman A.M."/>
            <person name="Buck D."/>
            <person name="Burgess J."/>
            <person name="Burrill W.D."/>
            <person name="Burton J."/>
            <person name="Carder C."/>
            <person name="Carter N.P."/>
            <person name="Chen Y."/>
            <person name="Clark G."/>
            <person name="Clegg S.M."/>
            <person name="Cobley V.E."/>
            <person name="Cole C.G."/>
            <person name="Collier R.E."/>
            <person name="Connor R."/>
            <person name="Conroy D."/>
            <person name="Corby N.R."/>
            <person name="Coville G.J."/>
            <person name="Cox A.V."/>
            <person name="Davis J."/>
            <person name="Dawson E."/>
            <person name="Dhami P.D."/>
            <person name="Dockree C."/>
            <person name="Dodsworth S.J."/>
            <person name="Durbin R.M."/>
            <person name="Ellington A.G."/>
            <person name="Evans K.L."/>
            <person name="Fey J.M."/>
            <person name="Fleming K."/>
            <person name="French L."/>
            <person name="Garner A.A."/>
            <person name="Gilbert J.G.R."/>
            <person name="Goward M.E."/>
            <person name="Grafham D.V."/>
            <person name="Griffiths M.N.D."/>
            <person name="Hall C."/>
            <person name="Hall R.E."/>
            <person name="Hall-Tamlyn G."/>
            <person name="Heathcott R.W."/>
            <person name="Ho S."/>
            <person name="Holmes S."/>
            <person name="Hunt S.E."/>
            <person name="Jones M.C."/>
            <person name="Kershaw J."/>
            <person name="Kimberley A.M."/>
            <person name="King A."/>
            <person name="Laird G.K."/>
            <person name="Langford C.F."/>
            <person name="Leversha M.A."/>
            <person name="Lloyd C."/>
            <person name="Lloyd D.M."/>
            <person name="Martyn I.D."/>
            <person name="Mashreghi-Mohammadi M."/>
            <person name="Matthews L.H."/>
            <person name="Mccann O.T."/>
            <person name="Mcclay J."/>
            <person name="Mclaren S."/>
            <person name="McMurray A.A."/>
            <person name="Milne S.A."/>
            <person name="Mortimore B.J."/>
            <person name="Odell C.N."/>
            <person name="Pavitt R."/>
            <person name="Pearce A.V."/>
            <person name="Pearson D."/>
            <person name="Phillimore B.J.C.T."/>
            <person name="Phillips S.H."/>
            <person name="Plumb R.W."/>
            <person name="Ramsay H."/>
            <person name="Ramsey Y."/>
            <person name="Rogers L."/>
            <person name="Ross M.T."/>
            <person name="Scott C.E."/>
            <person name="Sehra H.K."/>
            <person name="Skuce C.D."/>
            <person name="Smalley S."/>
            <person name="Smith M.L."/>
            <person name="Soderlund C."/>
            <person name="Spragon L."/>
            <person name="Steward C.A."/>
            <person name="Sulston J.E."/>
            <person name="Swann R.M."/>
            <person name="Vaudin M."/>
            <person name="Wall M."/>
            <person name="Wallis J.M."/>
            <person name="Whiteley M.N."/>
            <person name="Willey D.L."/>
            <person name="Williams L."/>
            <person name="Williams S.A."/>
            <person name="Williamson H."/>
            <person name="Wilmer T.E."/>
            <person name="Wilming L."/>
            <person name="Wright C.L."/>
            <person name="Hubbard T."/>
            <person name="Bentley D.R."/>
            <person name="Beck S."/>
            <person name="Rogers J."/>
            <person name="Shimizu N."/>
            <person name="Minoshima S."/>
            <person name="Kawasaki K."/>
            <person name="Sasaki T."/>
            <person name="Asakawa S."/>
            <person name="Kudoh J."/>
            <person name="Shintani A."/>
            <person name="Shibuya K."/>
            <person name="Yoshizaki Y."/>
            <person name="Aoki N."/>
            <person name="Mitsuyama S."/>
            <person name="Roe B.A."/>
            <person name="Chen F."/>
            <person name="Chu L."/>
            <person name="Crabtree J."/>
            <person name="Deschamps S."/>
            <person name="Do A."/>
            <person name="Do T."/>
            <person name="Dorman A."/>
            <person name="Fang F."/>
            <person name="Fu Y."/>
            <person name="Hu P."/>
            <person name="Hua A."/>
            <person name="Kenton S."/>
            <person name="Lai H."/>
            <person name="Lao H.I."/>
            <person name="Lewis J."/>
            <person name="Lewis S."/>
            <person name="Lin S.-P."/>
            <person name="Loh P."/>
            <person name="Malaj E."/>
            <person name="Nguyen T."/>
            <person name="Pan H."/>
            <person name="Phan S."/>
            <person name="Qi S."/>
            <person name="Qian Y."/>
            <person name="Ray L."/>
            <person name="Ren Q."/>
            <person name="Shaull S."/>
            <person name="Sloan D."/>
            <person name="Song L."/>
            <person name="Wang Q."/>
            <person name="Wang Y."/>
            <person name="Wang Z."/>
            <person name="White J."/>
            <person name="Willingham D."/>
            <person name="Wu H."/>
            <person name="Yao Z."/>
            <person name="Zhan M."/>
            <person name="Zhang G."/>
            <person name="Chissoe S."/>
            <person name="Murray J."/>
            <person name="Miller N."/>
            <person name="Minx P."/>
            <person name="Fulton R."/>
            <person name="Johnson D."/>
            <person name="Bemis G."/>
            <person name="Bentley D."/>
            <person name="Bradshaw H."/>
            <person name="Bourne S."/>
            <person name="Cordes M."/>
            <person name="Du Z."/>
            <person name="Fulton L."/>
            <person name="Goela D."/>
            <person name="Graves T."/>
            <person name="Hawkins J."/>
            <person name="Hinds K."/>
            <person name="Kemp K."/>
            <person name="Latreille P."/>
            <person name="Layman D."/>
            <person name="Ozersky P."/>
            <person name="Rohlfing T."/>
            <person name="Scheet P."/>
            <person name="Walker C."/>
            <person name="Wamsley A."/>
            <person name="Wohldmann P."/>
            <person name="Pepin K."/>
            <person name="Nelson J."/>
            <person name="Korf I."/>
            <person name="Bedell J.A."/>
            <person name="Hillier L.W."/>
            <person name="Mardis E."/>
            <person name="Waterston R."/>
            <person name="Wilson R."/>
            <person name="Emanuel B.S."/>
            <person name="Shaikh T."/>
            <person name="Kurahashi H."/>
            <person name="Saitta S."/>
            <person name="Budarf M.L."/>
            <person name="McDermid H.E."/>
            <person name="Johnson A."/>
            <person name="Wong A.C.C."/>
            <person name="Morrow B.E."/>
            <person name="Edelmann L."/>
            <person name="Kim U.J."/>
            <person name="Shizuya H."/>
            <person name="Simon M.I."/>
            <person name="Dumanski J.P."/>
            <person name="Peyrard M."/>
            <person name="Kedra D."/>
            <person name="Seroussi E."/>
            <person name="Fransson I."/>
            <person name="Tapia I."/>
            <person name="Bruder C.E."/>
            <person name="O'Brien K.P."/>
            <person name="Wilkinson P."/>
            <person name="Bodenteich A."/>
            <person name="Hartman K."/>
            <person name="Hu X."/>
            <person name="Khan A.S."/>
            <person name="Lane L."/>
            <person name="Tilahun Y."/>
            <person name="Wright H."/>
        </authorList>
    </citation>
    <scope>NUCLEOTIDE SEQUENCE [LARGE SCALE GENOMIC DNA]</scope>
</reference>
<reference key="8">
    <citation type="submission" date="2005-07" db="EMBL/GenBank/DDBJ databases">
        <authorList>
            <person name="Mural R.J."/>
            <person name="Istrail S."/>
            <person name="Sutton G.G."/>
            <person name="Florea L."/>
            <person name="Halpern A.L."/>
            <person name="Mobarry C.M."/>
            <person name="Lippert R."/>
            <person name="Walenz B."/>
            <person name="Shatkay H."/>
            <person name="Dew I."/>
            <person name="Miller J.R."/>
            <person name="Flanigan M.J."/>
            <person name="Edwards N.J."/>
            <person name="Bolanos R."/>
            <person name="Fasulo D."/>
            <person name="Halldorsson B.V."/>
            <person name="Hannenhalli S."/>
            <person name="Turner R."/>
            <person name="Yooseph S."/>
            <person name="Lu F."/>
            <person name="Nusskern D.R."/>
            <person name="Shue B.C."/>
            <person name="Zheng X.H."/>
            <person name="Zhong F."/>
            <person name="Delcher A.L."/>
            <person name="Huson D.H."/>
            <person name="Kravitz S.A."/>
            <person name="Mouchard L."/>
            <person name="Reinert K."/>
            <person name="Remington K.A."/>
            <person name="Clark A.G."/>
            <person name="Waterman M.S."/>
            <person name="Eichler E.E."/>
            <person name="Adams M.D."/>
            <person name="Hunkapiller M.W."/>
            <person name="Myers E.W."/>
            <person name="Venter J.C."/>
        </authorList>
    </citation>
    <scope>NUCLEOTIDE SEQUENCE [LARGE SCALE GENOMIC DNA]</scope>
</reference>
<reference key="9">
    <citation type="journal article" date="2004" name="Genome Res.">
        <title>The status, quality, and expansion of the NIH full-length cDNA project: the Mammalian Gene Collection (MGC).</title>
        <authorList>
            <consortium name="The MGC Project Team"/>
        </authorList>
    </citation>
    <scope>NUCLEOTIDE SEQUENCE [LARGE SCALE MRNA] (ISOFORM 1)</scope>
    <source>
        <tissue>Brain</tissue>
    </source>
</reference>
<reference key="10">
    <citation type="journal article" date="1994" name="J. Biol. Chem.">
        <title>Purification and characterization of a novel species of ubiquitin-carrier protein, E2, that is involved in degradation of non-'N-end rule' protein substrates.</title>
        <authorList>
            <person name="Blumenfeld N."/>
            <person name="Gonen H."/>
            <person name="Mayer A."/>
            <person name="Smith C.E."/>
            <person name="Siegel N.R."/>
            <person name="Schwartz A.L."/>
            <person name="Ciechanover A."/>
        </authorList>
    </citation>
    <scope>PROTEIN SEQUENCE OF 53-67; 67-74 AND 101-122</scope>
</reference>
<reference key="11">
    <citation type="journal article" date="2000" name="Biochim. Biophys. Acta">
        <title>Promoter analysis of the human ubiquitin-conjugating enzyme gene family UBE2L1-4, including UBE2L3 which encodes UbcH7.</title>
        <authorList>
            <person name="Ardley H.C."/>
            <person name="Moynihan T.P."/>
            <person name="Markham A.F."/>
            <person name="Robinson P.A."/>
        </authorList>
    </citation>
    <scope>PROMOTER ANALYSIS</scope>
</reference>
<reference key="12">
    <citation type="journal article" date="2000" name="Nat. Genet.">
        <title>Familial Parkinson disease gene product, parkin, is a ubiquitin-protein ligase.</title>
        <authorList>
            <person name="Shimura H."/>
            <person name="Hattori N."/>
            <person name="Kubo S."/>
            <person name="Mizuno Y."/>
            <person name="Asakawa S."/>
            <person name="Minoshima S."/>
            <person name="Shimizu N."/>
            <person name="Iwai K."/>
            <person name="Chiba T."/>
            <person name="Tanaka K."/>
            <person name="Suzuki T."/>
        </authorList>
    </citation>
    <scope>FUNCTION</scope>
    <scope>INTERACTION WITH PRKN</scope>
    <scope>MUTAGENESIS OF CYS-86</scope>
</reference>
<reference key="13">
    <citation type="journal article" date="2001" name="Biochem. Biophys. Res. Commun.">
        <title>A novel centrosomal ring-finger protein, dorfin, mediates ubiquitin ligase activity.</title>
        <authorList>
            <person name="Niwa J."/>
            <person name="Ishigaki S."/>
            <person name="Doyu M."/>
            <person name="Suzuki T."/>
            <person name="Tanaka K."/>
            <person name="Sobue G."/>
        </authorList>
    </citation>
    <scope>INTERACTION WITH RNF19A</scope>
</reference>
<reference key="14">
    <citation type="journal article" date="2001" name="J. Biol. Chem.">
        <title>Features of the parkin/ariadne-like ubiquitin ligase, HHARI, that regulate its interaction with the ubiquitin-conjugating enzyme, Ubch7.</title>
        <authorList>
            <person name="Ardley H.C."/>
            <person name="Tan N.G.S."/>
            <person name="Rose S.A."/>
            <person name="Markham A.F."/>
            <person name="Robinson P.A."/>
        </authorList>
    </citation>
    <scope>INTERACTION WITH ARIH1</scope>
    <scope>SUBCELLULAR LOCATION</scope>
</reference>
<reference key="15">
    <citation type="journal article" date="2003" name="Mol. Cell. Biol.">
        <title>A novel RING finger protein, human enhancer of invasion 10, alters mitotic progression through regulation of cyclin B levels.</title>
        <authorList>
            <person name="Toby G.G."/>
            <person name="Gherraby W."/>
            <person name="Coleman T.R."/>
            <person name="Golemis E.A."/>
        </authorList>
    </citation>
    <scope>INTERACTION WITH CCNB1IP1</scope>
</reference>
<reference key="16">
    <citation type="journal article" date="2004" name="Mol. Cell. Biol.">
        <title>The ubiquitin-conjugating enzyme UBCH7 acts as a coactivator for steroid hormone receptors.</title>
        <authorList>
            <person name="Verma S."/>
            <person name="Ismail A."/>
            <person name="Gao X."/>
            <person name="Fu G."/>
            <person name="Li X."/>
            <person name="O'Malley B.W."/>
            <person name="Nawaz Z."/>
        </authorList>
    </citation>
    <scope>FUNCTION</scope>
    <scope>INTERACTION WITH NCOA1</scope>
</reference>
<reference key="17">
    <citation type="journal article" date="2006" name="FEBS Lett.">
        <title>The p53-inducible E3 ubiquitin ligase p53RFP induces p53-dependent apoptosis.</title>
        <authorList>
            <person name="Huang J."/>
            <person name="Xu L.-G."/>
            <person name="Liu T."/>
            <person name="Zhai Z."/>
            <person name="Shu H.-B."/>
        </authorList>
    </citation>
    <scope>INTERACTION WITH RNF144B</scope>
</reference>
<reference key="18">
    <citation type="journal article" date="2006" name="J. Endocrinol.">
        <title>UbcH7 interacts with the glucocorticoid receptor and mediates receptor autoregulation.</title>
        <authorList>
            <person name="Garside H."/>
            <person name="Waters C."/>
            <person name="Berry A."/>
            <person name="Rice L."/>
            <person name="Ardley H.C."/>
            <person name="White A."/>
            <person name="Robinson P.A."/>
            <person name="Ray D."/>
        </authorList>
    </citation>
    <scope>FUNCTION</scope>
    <scope>INTERACTION WITH NR3C1</scope>
    <scope>SUBCELLULAR LOCATION</scope>
</reference>
<reference key="19">
    <citation type="journal article" date="2006" name="J. Immunol.">
        <title>NK lytic-associated molecule, involved in NK cytotoxic function, is an E3 ligase.</title>
        <authorList>
            <person name="Fortier J.M."/>
            <person name="Kornbluth J."/>
        </authorList>
    </citation>
    <scope>INTERACTION WITH RNF19B</scope>
</reference>
<reference key="20">
    <citation type="journal article" date="2009" name="Leukemia">
        <title>The ubiquitin ligase Triad1 inhibits myelopoiesis through UbcH7 and Ubc13 interacting domains.</title>
        <authorList>
            <person name="Marteijn J.A."/>
            <person name="van der Meer L.T."/>
            <person name="Smit J.J."/>
            <person name="Noordermeer S.M."/>
            <person name="Wissink W."/>
            <person name="Jansen P."/>
            <person name="Swarts H.G."/>
            <person name="Hibbert R.G."/>
            <person name="de Witte T."/>
            <person name="Sixma T.K."/>
            <person name="Jansen J.H."/>
            <person name="van der Reijden B.A."/>
        </authorList>
    </citation>
    <scope>FUNCTION</scope>
    <scope>INTERACTION WITH ARIH2</scope>
</reference>
<reference key="21">
    <citation type="journal article" date="2009" name="Mol. Biol. Cell">
        <title>Novel control of S phase of the cell cycle by ubiquitin-conjugating enzyme H7.</title>
        <authorList>
            <person name="Whitcomb E.A."/>
            <person name="Dudek E.J."/>
            <person name="Liu Q."/>
            <person name="Taylor A."/>
        </authorList>
    </citation>
    <scope>FUNCTION</scope>
    <scope>UBIQUITINATION</scope>
    <scope>MUTAGENESIS OF CYS-86</scope>
</reference>
<reference key="22">
    <citation type="journal article" date="2009" name="Science">
        <title>Lysine acetylation targets protein complexes and co-regulates major cellular functions.</title>
        <authorList>
            <person name="Choudhary C."/>
            <person name="Kumar C."/>
            <person name="Gnad F."/>
            <person name="Nielsen M.L."/>
            <person name="Rehman M."/>
            <person name="Walther T.C."/>
            <person name="Olsen J.V."/>
            <person name="Mann M."/>
        </authorList>
    </citation>
    <scope>ACETYLATION [LARGE SCALE ANALYSIS] AT LYS-131</scope>
    <scope>IDENTIFICATION BY MASS SPECTROMETRY [LARGE SCALE ANALYSIS]</scope>
</reference>
<reference key="23">
    <citation type="journal article" date="2010" name="J. Biol. Chem.">
        <title>The E2 ubiquitin-conjugating enzymes direct polyubiquitination to preferred lysines.</title>
        <authorList>
            <person name="David Y."/>
            <person name="Ziv T."/>
            <person name="Admon A."/>
            <person name="Navon A."/>
        </authorList>
    </citation>
    <scope>FUNCTION</scope>
    <scope>CATALYTIC ACTIVITY</scope>
</reference>
<reference key="24">
    <citation type="journal article" date="2011" name="BMC Syst. Biol.">
        <title>Initial characterization of the human central proteome.</title>
        <authorList>
            <person name="Burkard T.R."/>
            <person name="Planyavsky M."/>
            <person name="Kaupe I."/>
            <person name="Breitwieser F.P."/>
            <person name="Buerckstuemmer T."/>
            <person name="Bennett K.L."/>
            <person name="Superti-Furga G."/>
            <person name="Colinge J."/>
        </authorList>
    </citation>
    <scope>IDENTIFICATION BY MASS SPECTROMETRY [LARGE SCALE ANALYSIS]</scope>
</reference>
<reference key="25">
    <citation type="journal article" date="2011" name="Nature">
        <title>UBCH7 reactivity profile reveals parkin and HHARI to be RING/HECT hybrids.</title>
        <authorList>
            <person name="Wenzel D.M."/>
            <person name="Lissounov A."/>
            <person name="Brzovic P.S."/>
            <person name="Klevit R.E."/>
        </authorList>
    </citation>
    <scope>FUNCTION</scope>
    <scope>DOMAIN</scope>
    <scope>INTERACTION WITH PRKN AND ARIH1</scope>
    <scope>MUTAGENESIS OF PRO-88 AND HIS-119</scope>
</reference>
<reference key="26">
    <citation type="journal article" date="2012" name="Mol. Cell. Proteomics">
        <title>A human ubiquitin conjugating enzyme (E2)-HECT E3 ligase structure-function screen.</title>
        <authorList>
            <person name="Sheng Y."/>
            <person name="Hong J.H."/>
            <person name="Doherty R."/>
            <person name="Srikumar T."/>
            <person name="Shloush J."/>
            <person name="Avvakumov G.V."/>
            <person name="Walker J.R."/>
            <person name="Xue S."/>
            <person name="Neculai D."/>
            <person name="Wan J.W."/>
            <person name="Kim S.K."/>
            <person name="Arrowsmith C.H."/>
            <person name="Raught B."/>
            <person name="Dhe-Paganon S."/>
        </authorList>
    </citation>
    <scope>AUTOUBIQUITINATION</scope>
    <scope>MUTAGENESIS OF LYS-9; PHE-63; GLU-93; LYS-96 AND LYS-100</scope>
</reference>
<reference key="27">
    <citation type="journal article" date="2015" name="J. Immunol.">
        <title>Ndfip1 regulates itch ligase activity and airway inflammation via UbcH7.</title>
        <authorList>
            <person name="Kathania M."/>
            <person name="Zeng M."/>
            <person name="Yadav V.N."/>
            <person name="Moghaddam S.J."/>
            <person name="Yang B."/>
            <person name="Venuprasad K."/>
        </authorList>
    </citation>
    <scope>INTERACTION WITH NDFIP1</scope>
</reference>
<reference key="28">
    <citation type="journal article" date="2015" name="Proteomics">
        <title>N-terminome analysis of the human mitochondrial proteome.</title>
        <authorList>
            <person name="Vaca Jacome A.S."/>
            <person name="Rabilloud T."/>
            <person name="Schaeffer-Reiss C."/>
            <person name="Rompais M."/>
            <person name="Ayoub D."/>
            <person name="Lane L."/>
            <person name="Bairoch A."/>
            <person name="Van Dorsselaer A."/>
            <person name="Carapito C."/>
        </authorList>
    </citation>
    <scope>IDENTIFICATION BY MASS SPECTROMETRY [LARGE SCALE ANALYSIS]</scope>
</reference>
<reference key="29">
    <citation type="journal article" date="2024" name="Nat. Struct. Mol. Biol.">
        <title>Noncanonical assembly, neddylation and chimeric cullin-RING/RBR ubiquitylation by the 1.8 MDa CUL9 E3 ligase complex.</title>
        <authorList>
            <person name="Horn-Ghetko D."/>
            <person name="Hopf L.V.M."/>
            <person name="Tripathi-Giesgen I."/>
            <person name="Du J."/>
            <person name="Kostrhon S."/>
            <person name="Vu D.T."/>
            <person name="Beier V."/>
            <person name="Steigenberger B."/>
            <person name="Prabu J.R."/>
            <person name="Stier L."/>
            <person name="Bruss E.M."/>
            <person name="Mann M."/>
            <person name="Xiong Y."/>
            <person name="Schulman B.A."/>
        </authorList>
    </citation>
    <scope>FUNCTION</scope>
    <scope>CATALYTIC ACTIVITY</scope>
    <scope>MUTAGENESIS OF PHE-63</scope>
</reference>
<reference key="30">
    <citation type="journal article" date="1999" name="Science">
        <title>Structure of an E6AP-UbcH7 complex: insights into ubiquitination by the E2-E3 enzyme cascade.</title>
        <authorList>
            <person name="Huang L."/>
            <person name="Kinnucan E."/>
            <person name="Wang G."/>
            <person name="Beaudenon S."/>
            <person name="Howley P.M."/>
            <person name="Huibregtse J.M."/>
            <person name="Pavletich N.P."/>
        </authorList>
    </citation>
    <scope>X-RAY CRYSTALLOGRAPHY (2.6 ANGSTROMS) IN COMPLEX WITH UBE3A</scope>
</reference>
<reference key="31">
    <citation type="journal article" date="2000" name="Cell">
        <title>Structure of a c-Cbl-UbcH7 complex: RING domain function in ubiquitin-protein ligases.</title>
        <authorList>
            <person name="Zheng N."/>
            <person name="Wang P."/>
            <person name="Jeffrey P.D."/>
            <person name="Pavletich N.P."/>
        </authorList>
    </citation>
    <scope>X-RAY CRYSTALLOGRAPHY (2.9 ANGSTROMS) IN COMPLEX WITH 47-434 OF CBL AND ZAP70</scope>
</reference>
<reference key="32">
    <citation type="journal article" date="2022" name="Proc. Natl. Acad. Sci. U.S.A.">
        <title>Mechanistic insights into the subversion of the linear ubiquitin chain assembly complex by the E3 ligase IpaH1.4 of Shigella flexneri.</title>
        <authorList>
            <person name="Liu J."/>
            <person name="Wang Y."/>
            <person name="Wang D."/>
            <person name="Wang Y."/>
            <person name="Xu X."/>
            <person name="Zhang Y."/>
            <person name="Li Y."/>
            <person name="Zhang M."/>
            <person name="Gong X."/>
            <person name="Tang Y."/>
            <person name="Shen L."/>
            <person name="Li M."/>
            <person name="Pan L."/>
        </authorList>
    </citation>
    <scope>X-RAY CRYSTALLOGRAPHY (1.66 ANGSTROMS) IN COMPLEX WITH RNF31</scope>
    <scope>FUNCTION</scope>
</reference>
<proteinExistence type="evidence at protein level"/>
<protein>
    <recommendedName>
        <fullName>Ubiquitin-conjugating enzyme E2 L3</fullName>
        <ecNumber evidence="15">2.3.2.23</ecNumber>
    </recommendedName>
    <alternativeName>
        <fullName>E2 ubiquitin-conjugating enzyme L3</fullName>
    </alternativeName>
    <alternativeName>
        <fullName>L-UBC</fullName>
    </alternativeName>
    <alternativeName>
        <fullName>UbcH7</fullName>
    </alternativeName>
    <alternativeName>
        <fullName>Ubiquitin carrier protein L3</fullName>
    </alternativeName>
    <alternativeName>
        <fullName>Ubiquitin-conjugating enzyme E2-F1</fullName>
    </alternativeName>
    <alternativeName>
        <fullName>Ubiquitin-protein ligase L3</fullName>
    </alternativeName>
</protein>
<feature type="chain" id="PRO_0000082476" description="Ubiquitin-conjugating enzyme E2 L3">
    <location>
        <begin position="1"/>
        <end position="154"/>
    </location>
</feature>
<feature type="domain" description="UBC core" evidence="1">
    <location>
        <begin position="2"/>
        <end position="149"/>
    </location>
</feature>
<feature type="active site" description="Glycyl thioester intermediate" evidence="1 2">
    <location>
        <position position="86"/>
    </location>
</feature>
<feature type="modified residue" description="N6-acetyllysine" evidence="23">
    <location>
        <position position="131"/>
    </location>
</feature>
<feature type="splice variant" id="VSP_047342" description="In isoform 3." evidence="21">
    <original>MAASRRLMK</original>
    <variation>MQVAAGTRGDTRLQEVALLPQLFDLLVLGQRRARLLRQVPSALAGKDLAQLQAGATLAGYRRAHGPE</variation>
    <location>
        <begin position="1"/>
        <end position="9"/>
    </location>
</feature>
<feature type="splice variant" id="VSP_045152" description="In isoform 2." evidence="21">
    <location>
        <begin position="10"/>
        <end position="41"/>
    </location>
</feature>
<feature type="mutagenesis site" description="Marked decrease in autoubiquitination." evidence="17">
    <original>K</original>
    <variation>E</variation>
    <location>
        <position position="9"/>
    </location>
</feature>
<feature type="mutagenesis site" description="Decrease in autoubiquitination. Abolishes ubiquitination of TP53 by the CUL9-RBX1 complex." evidence="17 20">
    <original>F</original>
    <variation>A</variation>
    <location>
        <position position="63"/>
    </location>
</feature>
<feature type="mutagenesis site" description="Loss of catalytic activity. Prevents ubiquitin-dependent proteasomal degradation of UBE2L3." evidence="4 13">
    <original>C</original>
    <variation>S</variation>
    <location>
        <position position="86"/>
    </location>
</feature>
<feature type="mutagenesis site" description="Does not convert into a lysine reactive E2; when associated with D-119." evidence="16">
    <original>P</original>
    <variation>D</variation>
    <location>
        <position position="88"/>
    </location>
</feature>
<feature type="mutagenesis site" description="Decrease in autoubiquitination." evidence="17">
    <original>E</original>
    <variation>R</variation>
    <location>
        <position position="93"/>
    </location>
</feature>
<feature type="mutagenesis site" description="Decrease in autoubiquitination." evidence="17">
    <original>K</original>
    <variation>E</variation>
    <location>
        <position position="96"/>
    </location>
</feature>
<feature type="mutagenesis site" description="Decrease in autoubiquitination." evidence="17">
    <original>K</original>
    <variation>E</variation>
    <location>
        <position position="100"/>
    </location>
</feature>
<feature type="mutagenesis site" description="Does not convert into a lysine reactive E2; when associated with D-88." evidence="16">
    <original>H</original>
    <variation>D</variation>
    <location>
        <position position="119"/>
    </location>
</feature>
<feature type="sequence conflict" description="In Ref. 6; BAG61806." evidence="22" ref="6">
    <original>R</original>
    <variation>S</variation>
    <location>
        <position position="15"/>
    </location>
</feature>
<feature type="sequence conflict" description="In Ref. 4; AAG17922." evidence="22" ref="4">
    <original>R</original>
    <variation>C</variation>
    <location>
        <position position="23"/>
    </location>
</feature>
<feature type="sequence conflict" description="In Ref. 4; AAG17922." evidence="22" ref="4">
    <original>E</original>
    <variation>K</variation>
    <location>
        <position position="118"/>
    </location>
</feature>
<feature type="helix" evidence="27">
    <location>
        <begin position="2"/>
        <end position="16"/>
    </location>
</feature>
<feature type="strand" evidence="27">
    <location>
        <begin position="20"/>
        <end position="27"/>
    </location>
</feature>
<feature type="turn" evidence="24">
    <location>
        <begin position="29"/>
        <end position="31"/>
    </location>
</feature>
<feature type="strand" evidence="27">
    <location>
        <begin position="34"/>
        <end position="39"/>
    </location>
</feature>
<feature type="turn" evidence="26">
    <location>
        <begin position="44"/>
        <end position="48"/>
    </location>
</feature>
<feature type="strand" evidence="27">
    <location>
        <begin position="50"/>
        <end position="56"/>
    </location>
</feature>
<feature type="turn" evidence="27">
    <location>
        <begin position="59"/>
        <end position="62"/>
    </location>
</feature>
<feature type="strand" evidence="27">
    <location>
        <begin position="67"/>
        <end position="72"/>
    </location>
</feature>
<feature type="strand" evidence="24">
    <location>
        <begin position="77"/>
        <end position="79"/>
    </location>
</feature>
<feature type="strand" evidence="26">
    <location>
        <begin position="83"/>
        <end position="85"/>
    </location>
</feature>
<feature type="helix" evidence="27">
    <location>
        <begin position="88"/>
        <end position="90"/>
    </location>
</feature>
<feature type="turn" evidence="27">
    <location>
        <begin position="92"/>
        <end position="94"/>
    </location>
</feature>
<feature type="helix" evidence="27">
    <location>
        <begin position="101"/>
        <end position="113"/>
    </location>
</feature>
<feature type="strand" evidence="25">
    <location>
        <begin position="117"/>
        <end position="119"/>
    </location>
</feature>
<feature type="helix" evidence="27">
    <location>
        <begin position="123"/>
        <end position="131"/>
    </location>
</feature>
<feature type="helix" evidence="27">
    <location>
        <begin position="133"/>
        <end position="147"/>
    </location>
</feature>
<gene>
    <name type="primary">UBE2L3</name>
    <name type="synonym">UBCE7</name>
    <name type="synonym">UBCH7</name>
</gene>
<keyword id="KW-0002">3D-structure</keyword>
<keyword id="KW-0007">Acetylation</keyword>
<keyword id="KW-0025">Alternative splicing</keyword>
<keyword id="KW-0067">ATP-binding</keyword>
<keyword id="KW-0963">Cytoplasm</keyword>
<keyword id="KW-0903">Direct protein sequencing</keyword>
<keyword id="KW-0547">Nucleotide-binding</keyword>
<keyword id="KW-0539">Nucleus</keyword>
<keyword id="KW-1267">Proteomics identification</keyword>
<keyword id="KW-1185">Reference proteome</keyword>
<keyword id="KW-0804">Transcription</keyword>
<keyword id="KW-0805">Transcription regulation</keyword>
<keyword id="KW-0808">Transferase</keyword>
<keyword id="KW-0832">Ubl conjugation</keyword>
<keyword id="KW-0833">Ubl conjugation pathway</keyword>
<sequence>MAASRRLMKELEEIRKCGMKNFRNIQVDEANLLTWQGLIVPDNPPYDKGAFRIEINFPAEYPFKPPKITFKTKIYHPNIDEKGQVCLPVISAENWKPATKTDQVIQSLIALVNDPQPEHPLRADLAEEYSKDRKKFCKNAEEFTKKYGEKRPVD</sequence>